<feature type="chain" id="PRO_1000007386" description="Large ribosomal subunit protein bL28">
    <location>
        <begin position="1"/>
        <end position="78"/>
    </location>
</feature>
<dbReference type="EMBL" id="CT971583">
    <property type="protein sequence ID" value="CAK23663.1"/>
    <property type="molecule type" value="Genomic_DNA"/>
</dbReference>
<dbReference type="SMR" id="A5GL48"/>
<dbReference type="STRING" id="32051.SynWH7803_1237"/>
<dbReference type="KEGG" id="syx:SynWH7803_1237"/>
<dbReference type="eggNOG" id="COG0227">
    <property type="taxonomic scope" value="Bacteria"/>
</dbReference>
<dbReference type="HOGENOM" id="CLU_064548_3_0_3"/>
<dbReference type="OrthoDB" id="9805609at2"/>
<dbReference type="Proteomes" id="UP000001566">
    <property type="component" value="Chromosome"/>
</dbReference>
<dbReference type="GO" id="GO:1990904">
    <property type="term" value="C:ribonucleoprotein complex"/>
    <property type="evidence" value="ECO:0007669"/>
    <property type="project" value="UniProtKB-KW"/>
</dbReference>
<dbReference type="GO" id="GO:0005840">
    <property type="term" value="C:ribosome"/>
    <property type="evidence" value="ECO:0007669"/>
    <property type="project" value="UniProtKB-KW"/>
</dbReference>
<dbReference type="GO" id="GO:0003735">
    <property type="term" value="F:structural constituent of ribosome"/>
    <property type="evidence" value="ECO:0007669"/>
    <property type="project" value="InterPro"/>
</dbReference>
<dbReference type="GO" id="GO:0006412">
    <property type="term" value="P:translation"/>
    <property type="evidence" value="ECO:0007669"/>
    <property type="project" value="UniProtKB-UniRule"/>
</dbReference>
<dbReference type="Gene3D" id="2.30.170.40">
    <property type="entry name" value="Ribosomal protein L28/L24"/>
    <property type="match status" value="1"/>
</dbReference>
<dbReference type="HAMAP" id="MF_00373">
    <property type="entry name" value="Ribosomal_bL28"/>
    <property type="match status" value="1"/>
</dbReference>
<dbReference type="InterPro" id="IPR026569">
    <property type="entry name" value="Ribosomal_bL28"/>
</dbReference>
<dbReference type="InterPro" id="IPR034704">
    <property type="entry name" value="Ribosomal_bL28/bL31-like_sf"/>
</dbReference>
<dbReference type="InterPro" id="IPR001383">
    <property type="entry name" value="Ribosomal_bL28_bact-type"/>
</dbReference>
<dbReference type="InterPro" id="IPR037147">
    <property type="entry name" value="Ribosomal_bL28_sf"/>
</dbReference>
<dbReference type="NCBIfam" id="TIGR00009">
    <property type="entry name" value="L28"/>
    <property type="match status" value="1"/>
</dbReference>
<dbReference type="PANTHER" id="PTHR13528">
    <property type="entry name" value="39S RIBOSOMAL PROTEIN L28, MITOCHONDRIAL"/>
    <property type="match status" value="1"/>
</dbReference>
<dbReference type="PANTHER" id="PTHR13528:SF2">
    <property type="entry name" value="LARGE RIBOSOMAL SUBUNIT PROTEIN BL28M"/>
    <property type="match status" value="1"/>
</dbReference>
<dbReference type="Pfam" id="PF00830">
    <property type="entry name" value="Ribosomal_L28"/>
    <property type="match status" value="1"/>
</dbReference>
<dbReference type="SUPFAM" id="SSF143800">
    <property type="entry name" value="L28p-like"/>
    <property type="match status" value="1"/>
</dbReference>
<evidence type="ECO:0000255" key="1">
    <source>
        <dbReference type="HAMAP-Rule" id="MF_00373"/>
    </source>
</evidence>
<evidence type="ECO:0000305" key="2"/>
<sequence>MSRVCQLTGTKANNGMAVSHSHIRTKKLQQANLQQRRLWWAEGKRWVNLRITTRALKTIQKKGLGAYAKSLGIDLARL</sequence>
<protein>
    <recommendedName>
        <fullName evidence="1">Large ribosomal subunit protein bL28</fullName>
    </recommendedName>
    <alternativeName>
        <fullName evidence="2">50S ribosomal protein L28</fullName>
    </alternativeName>
</protein>
<accession>A5GL48</accession>
<proteinExistence type="inferred from homology"/>
<name>RL28_SYNPW</name>
<gene>
    <name evidence="1" type="primary">rpmB</name>
    <name evidence="1" type="synonym">rpl28</name>
    <name type="ordered locus">SynWH7803_1237</name>
</gene>
<reference key="1">
    <citation type="submission" date="2006-05" db="EMBL/GenBank/DDBJ databases">
        <authorList>
            <consortium name="Genoscope"/>
        </authorList>
    </citation>
    <scope>NUCLEOTIDE SEQUENCE [LARGE SCALE GENOMIC DNA]</scope>
    <source>
        <strain>WH7803</strain>
    </source>
</reference>
<organism>
    <name type="scientific">Synechococcus sp. (strain WH7803)</name>
    <dbReference type="NCBI Taxonomy" id="32051"/>
    <lineage>
        <taxon>Bacteria</taxon>
        <taxon>Bacillati</taxon>
        <taxon>Cyanobacteriota</taxon>
        <taxon>Cyanophyceae</taxon>
        <taxon>Synechococcales</taxon>
        <taxon>Synechococcaceae</taxon>
        <taxon>Synechococcus</taxon>
    </lineage>
</organism>
<keyword id="KW-1185">Reference proteome</keyword>
<keyword id="KW-0687">Ribonucleoprotein</keyword>
<keyword id="KW-0689">Ribosomal protein</keyword>
<comment type="similarity">
    <text evidence="1">Belongs to the bacterial ribosomal protein bL28 family.</text>
</comment>